<proteinExistence type="evidence at protein level"/>
<feature type="chain" id="PRO_0000422826" description="Ribose 1,5-bisphosphate isomerase">
    <location>
        <begin position="1"/>
        <end position="322"/>
    </location>
</feature>
<feature type="active site" description="Proton acceptor" evidence="1 3">
    <location>
        <position position="133"/>
    </location>
</feature>
<feature type="active site" description="Proton donor" evidence="1 3">
    <location>
        <position position="202"/>
    </location>
</feature>
<feature type="binding site" evidence="1">
    <location>
        <begin position="20"/>
        <end position="23"/>
    </location>
    <ligand>
        <name>substrate</name>
    </ligand>
</feature>
<feature type="binding site" evidence="1 3">
    <location>
        <position position="63"/>
    </location>
    <ligand>
        <name>substrate</name>
    </ligand>
</feature>
<feature type="binding site" evidence="1">
    <location>
        <begin position="135"/>
        <end position="137"/>
    </location>
    <ligand>
        <name>substrate</name>
    </ligand>
</feature>
<feature type="binding site" evidence="1">
    <location>
        <begin position="212"/>
        <end position="213"/>
    </location>
    <ligand>
        <name>substrate</name>
    </ligand>
</feature>
<feature type="binding site" evidence="1 3">
    <location>
        <position position="238"/>
    </location>
    <ligand>
        <name>substrate</name>
    </ligand>
</feature>
<feature type="site" description="Plays a key role in hexamerization">
    <location>
        <position position="227"/>
    </location>
</feature>
<feature type="mutagenesis site" description="Loss of catalytic activity." evidence="3">
    <original>C</original>
    <variation>A</variation>
    <variation>S</variation>
    <location>
        <position position="133"/>
    </location>
</feature>
<feature type="mutagenesis site" description="Loss of catalytic activity." evidence="3">
    <original>D</original>
    <variation>N</variation>
    <location>
        <position position="202"/>
    </location>
</feature>
<feature type="mutagenesis site" description="Impairs molecular assembly. 60-fold decrease in catalytic activity." evidence="3">
    <original>R</original>
    <variation>E</variation>
    <location>
        <position position="227"/>
    </location>
</feature>
<feature type="helix" evidence="6">
    <location>
        <begin position="6"/>
        <end position="15"/>
    </location>
</feature>
<feature type="helix" evidence="6">
    <location>
        <begin position="22"/>
        <end position="39"/>
    </location>
</feature>
<feature type="helix" evidence="6">
    <location>
        <begin position="45"/>
        <end position="60"/>
    </location>
</feature>
<feature type="helix" evidence="6">
    <location>
        <begin position="68"/>
        <end position="85"/>
    </location>
</feature>
<feature type="helix" evidence="6">
    <location>
        <begin position="90"/>
        <end position="120"/>
    </location>
</feature>
<feature type="strand" evidence="6">
    <location>
        <begin position="128"/>
        <end position="131"/>
    </location>
</feature>
<feature type="helix" evidence="6">
    <location>
        <begin position="136"/>
        <end position="147"/>
    </location>
</feature>
<feature type="strand" evidence="6">
    <location>
        <begin position="153"/>
        <end position="157"/>
    </location>
</feature>
<feature type="turn" evidence="6">
    <location>
        <begin position="160"/>
        <end position="163"/>
    </location>
</feature>
<feature type="helix" evidence="6">
    <location>
        <begin position="164"/>
        <end position="174"/>
    </location>
</feature>
<feature type="strand" evidence="6">
    <location>
        <begin position="179"/>
        <end position="182"/>
    </location>
</feature>
<feature type="helix" evidence="6">
    <location>
        <begin position="184"/>
        <end position="186"/>
    </location>
</feature>
<feature type="turn" evidence="6">
    <location>
        <begin position="187"/>
        <end position="190"/>
    </location>
</feature>
<feature type="helix" evidence="6">
    <location>
        <begin position="191"/>
        <end position="193"/>
    </location>
</feature>
<feature type="strand" evidence="6">
    <location>
        <begin position="195"/>
        <end position="199"/>
    </location>
</feature>
<feature type="strand" evidence="6">
    <location>
        <begin position="202"/>
        <end position="204"/>
    </location>
</feature>
<feature type="strand" evidence="6">
    <location>
        <begin position="210"/>
        <end position="213"/>
    </location>
</feature>
<feature type="helix" evidence="6">
    <location>
        <begin position="216"/>
        <end position="225"/>
    </location>
</feature>
<feature type="strand" evidence="6">
    <location>
        <begin position="229"/>
        <end position="233"/>
    </location>
</feature>
<feature type="helix" evidence="6">
    <location>
        <begin position="236"/>
        <end position="238"/>
    </location>
</feature>
<feature type="strand" evidence="6">
    <location>
        <begin position="244"/>
        <end position="247"/>
    </location>
</feature>
<feature type="helix" evidence="6">
    <location>
        <begin position="256"/>
        <end position="258"/>
    </location>
</feature>
<feature type="helix" evidence="6">
    <location>
        <begin position="262"/>
        <end position="265"/>
    </location>
</feature>
<feature type="strand" evidence="6">
    <location>
        <begin position="272"/>
        <end position="274"/>
    </location>
</feature>
<feature type="strand" evidence="6">
    <location>
        <begin position="277"/>
        <end position="282"/>
    </location>
</feature>
<feature type="helix" evidence="6">
    <location>
        <begin position="284"/>
        <end position="286"/>
    </location>
</feature>
<feature type="strand" evidence="6">
    <location>
        <begin position="288"/>
        <end position="292"/>
    </location>
</feature>
<feature type="strand" evidence="6">
    <location>
        <begin position="295"/>
        <end position="297"/>
    </location>
</feature>
<feature type="helix" evidence="6">
    <location>
        <begin position="299"/>
        <end position="301"/>
    </location>
</feature>
<feature type="helix" evidence="6">
    <location>
        <begin position="302"/>
        <end position="310"/>
    </location>
</feature>
<feature type="strand" evidence="6">
    <location>
        <begin position="314"/>
        <end position="316"/>
    </location>
</feature>
<comment type="function">
    <text evidence="2 3 4">Catalyzes the isomerization of ribose 1,5-bisphosphate (R15P) to ribulose 1,5-bisphosphate (RuBP), the CO(2) acceptor and substrate for RubisCO. Only accepts the alpha-anomer of D-ribose 1,5-bisphosphate as substrate, being inactive on the beta-anomer. Displays a strict substrate specificity, since other phosphorylated sugars such as R5P, ribose, G16P, G6P, G1P, FBP, F6P, and PRPP, are not substrates. Functions in an archaeal AMP degradation pathway, together with AMP phosphorylase and RubisCO.</text>
</comment>
<comment type="catalytic activity">
    <reaction evidence="1 2 3 4">
        <text>alpha-D-ribose 1,5-bisphosphate = D-ribulose 1,5-bisphosphate</text>
        <dbReference type="Rhea" id="RHEA:32243"/>
        <dbReference type="ChEBI" id="CHEBI:57870"/>
        <dbReference type="ChEBI" id="CHEBI:68688"/>
        <dbReference type="EC" id="5.3.1.29"/>
    </reaction>
</comment>
<comment type="activity regulation">
    <text evidence="4">Is highly activated in the presence of AMP, with an increase of &gt;40-fold in activity levels. Among other nucleotides, isomerase activity is slightly increased in the presence of GMP, but CMP, UMP, TMP, and NAD(+) have no effect; therefore, AMP is likely the major activator of R15P isomerase in vivo. To a lesser extent, various compounds with an adenosyl moiety, such as dAMP, adenosine, or methylthioadenosine, can also act as activators. The regulation of this enzyme by AMP prevents excess degradation of intracellular AMP by the archaeal AMP degradation pathway.</text>
</comment>
<comment type="biophysicochemical properties">
    <kinetics>
        <KM evidence="4">0.6 mM for D-ribose 1,5-bisphosphate (in the presence of AMP, at 85 degrees Celsius)</KM>
        <text>kcat is 29.2 sec(-1) (in the presence of AMP, at 85 degrees Celsius).</text>
    </kinetics>
</comment>
<comment type="subunit">
    <text evidence="3">Homohexamer; trimer of dimers.</text>
</comment>
<comment type="induction">
    <text evidence="4">Up-regulated by nucleosides (at protein level).</text>
</comment>
<comment type="miscellaneous">
    <text evidence="1">Reaction proceeds via a cis-phosphoenolate intermediate.</text>
</comment>
<comment type="similarity">
    <text evidence="1 5">Belongs to the eIF-2B alpha/beta/delta subunits family. R15P isomerase subfamily.</text>
</comment>
<name>R15PI_THEKO</name>
<accession>Q5JFM9</accession>
<gene>
    <name type="ordered locus">TK0185</name>
</gene>
<protein>
    <recommendedName>
        <fullName evidence="1">Ribose 1,5-bisphosphate isomerase</fullName>
        <shortName evidence="1">R15P isomerase</shortName>
        <shortName evidence="1">R15Pi</shortName>
        <ecNumber evidence="1 2 3 4">5.3.1.29</ecNumber>
    </recommendedName>
    <alternativeName>
        <fullName evidence="1">Ribulose 1,5-bisphosphate synthase</fullName>
        <shortName evidence="1">RuBP synthase</shortName>
    </alternativeName>
</protein>
<keyword id="KW-0002">3D-structure</keyword>
<keyword id="KW-0119">Carbohydrate metabolism</keyword>
<keyword id="KW-0413">Isomerase</keyword>
<keyword id="KW-1185">Reference proteome</keyword>
<evidence type="ECO:0000255" key="1">
    <source>
        <dbReference type="HAMAP-Rule" id="MF_02230"/>
    </source>
</evidence>
<evidence type="ECO:0000269" key="2">
    <source>
    </source>
</evidence>
<evidence type="ECO:0000269" key="3">
    <source>
    </source>
</evidence>
<evidence type="ECO:0000269" key="4">
    <source>
    </source>
</evidence>
<evidence type="ECO:0000305" key="5"/>
<evidence type="ECO:0007829" key="6">
    <source>
        <dbReference type="PDB" id="3A11"/>
    </source>
</evidence>
<organism>
    <name type="scientific">Thermococcus kodakarensis (strain ATCC BAA-918 / JCM 12380 / KOD1)</name>
    <name type="common">Pyrococcus kodakaraensis (strain KOD1)</name>
    <dbReference type="NCBI Taxonomy" id="69014"/>
    <lineage>
        <taxon>Archaea</taxon>
        <taxon>Methanobacteriati</taxon>
        <taxon>Methanobacteriota</taxon>
        <taxon>Thermococci</taxon>
        <taxon>Thermococcales</taxon>
        <taxon>Thermococcaceae</taxon>
        <taxon>Thermococcus</taxon>
    </lineage>
</organism>
<dbReference type="EC" id="5.3.1.29" evidence="1 2 3 4"/>
<dbReference type="EMBL" id="AP006878">
    <property type="protein sequence ID" value="BAD84374.1"/>
    <property type="molecule type" value="Genomic_DNA"/>
</dbReference>
<dbReference type="RefSeq" id="WP_011249140.1">
    <property type="nucleotide sequence ID" value="NC_006624.1"/>
</dbReference>
<dbReference type="PDB" id="3A11">
    <property type="method" value="X-ray"/>
    <property type="resolution" value="2.50 A"/>
    <property type="chains" value="A/B/C/D/E/F=1-322"/>
</dbReference>
<dbReference type="PDB" id="3A9C">
    <property type="method" value="X-ray"/>
    <property type="resolution" value="2.60 A"/>
    <property type="chains" value="A/B/C/D/E/F=1-322"/>
</dbReference>
<dbReference type="PDB" id="3VM6">
    <property type="method" value="X-ray"/>
    <property type="resolution" value="2.85 A"/>
    <property type="chains" value="A/B/C=1-322"/>
</dbReference>
<dbReference type="PDBsum" id="3A11"/>
<dbReference type="PDBsum" id="3A9C"/>
<dbReference type="PDBsum" id="3VM6"/>
<dbReference type="SMR" id="Q5JFM9"/>
<dbReference type="FunCoup" id="Q5JFM9">
    <property type="interactions" value="31"/>
</dbReference>
<dbReference type="STRING" id="69014.TK0185"/>
<dbReference type="EnsemblBacteria" id="BAD84374">
    <property type="protein sequence ID" value="BAD84374"/>
    <property type="gene ID" value="TK0185"/>
</dbReference>
<dbReference type="GeneID" id="78446689"/>
<dbReference type="KEGG" id="tko:TK0185"/>
<dbReference type="PATRIC" id="fig|69014.16.peg.185"/>
<dbReference type="eggNOG" id="arCOG01124">
    <property type="taxonomic scope" value="Archaea"/>
</dbReference>
<dbReference type="HOGENOM" id="CLU_016218_2_1_2"/>
<dbReference type="InParanoid" id="Q5JFM9"/>
<dbReference type="OrthoDB" id="27639at2157"/>
<dbReference type="PhylomeDB" id="Q5JFM9"/>
<dbReference type="BRENDA" id="5.3.1.29">
    <property type="organism ID" value="5246"/>
</dbReference>
<dbReference type="EvolutionaryTrace" id="Q5JFM9"/>
<dbReference type="Proteomes" id="UP000000536">
    <property type="component" value="Chromosome"/>
</dbReference>
<dbReference type="GO" id="GO:0043917">
    <property type="term" value="F:ribose 1,5-bisphosphate isomerase activity"/>
    <property type="evidence" value="ECO:0007669"/>
    <property type="project" value="UniProtKB-UniRule"/>
</dbReference>
<dbReference type="GO" id="GO:0046523">
    <property type="term" value="F:S-methyl-5-thioribose-1-phosphate isomerase activity"/>
    <property type="evidence" value="ECO:0000318"/>
    <property type="project" value="GO_Central"/>
</dbReference>
<dbReference type="GO" id="GO:0019509">
    <property type="term" value="P:L-methionine salvage from methylthioadenosine"/>
    <property type="evidence" value="ECO:0000318"/>
    <property type="project" value="GO_Central"/>
</dbReference>
<dbReference type="GO" id="GO:0019323">
    <property type="term" value="P:pentose catabolic process"/>
    <property type="evidence" value="ECO:0007669"/>
    <property type="project" value="UniProtKB-UniRule"/>
</dbReference>
<dbReference type="FunFam" id="1.20.120.420:FF:000011">
    <property type="entry name" value="Ribose 1,5-bisphosphate isomerase"/>
    <property type="match status" value="1"/>
</dbReference>
<dbReference type="FunFam" id="3.40.50.10470:FF:000019">
    <property type="entry name" value="Ribose 1,5-bisphosphate isomerase"/>
    <property type="match status" value="1"/>
</dbReference>
<dbReference type="Gene3D" id="1.20.120.420">
    <property type="entry name" value="translation initiation factor eif-2b, domain 1"/>
    <property type="match status" value="1"/>
</dbReference>
<dbReference type="Gene3D" id="3.40.50.10470">
    <property type="entry name" value="Translation initiation factor eif-2b, domain 2"/>
    <property type="match status" value="1"/>
</dbReference>
<dbReference type="HAMAP" id="MF_02230">
    <property type="entry name" value="R15P_isomerase"/>
    <property type="match status" value="1"/>
</dbReference>
<dbReference type="InterPro" id="IPR000649">
    <property type="entry name" value="IF-2B-related"/>
</dbReference>
<dbReference type="InterPro" id="IPR042529">
    <property type="entry name" value="IF_2B-like_C"/>
</dbReference>
<dbReference type="InterPro" id="IPR011559">
    <property type="entry name" value="Initiation_fac_2B_a/b/d"/>
</dbReference>
<dbReference type="InterPro" id="IPR027363">
    <property type="entry name" value="M1Pi_N"/>
</dbReference>
<dbReference type="InterPro" id="IPR037171">
    <property type="entry name" value="NagB/RpiA_transferase-like"/>
</dbReference>
<dbReference type="InterPro" id="IPR005250">
    <property type="entry name" value="R15Pi"/>
</dbReference>
<dbReference type="NCBIfam" id="TIGR00524">
    <property type="entry name" value="eIF-2B_rel"/>
    <property type="match status" value="1"/>
</dbReference>
<dbReference type="NCBIfam" id="TIGR00511">
    <property type="entry name" value="ribulose_e2b2"/>
    <property type="match status" value="1"/>
</dbReference>
<dbReference type="PANTHER" id="PTHR43475">
    <property type="entry name" value="METHYLTHIORIBOSE-1-PHOSPHATE ISOMERASE"/>
    <property type="match status" value="1"/>
</dbReference>
<dbReference type="PANTHER" id="PTHR43475:SF2">
    <property type="entry name" value="RIBOSE 1,5-BISPHOSPHATE ISOMERASE"/>
    <property type="match status" value="1"/>
</dbReference>
<dbReference type="Pfam" id="PF01008">
    <property type="entry name" value="IF-2B"/>
    <property type="match status" value="1"/>
</dbReference>
<dbReference type="SUPFAM" id="SSF100950">
    <property type="entry name" value="NagB/RpiA/CoA transferase-like"/>
    <property type="match status" value="1"/>
</dbReference>
<reference key="1">
    <citation type="journal article" date="2005" name="Genome Res.">
        <title>Complete genome sequence of the hyperthermophilic archaeon Thermococcus kodakaraensis KOD1 and comparison with Pyrococcus genomes.</title>
        <authorList>
            <person name="Fukui T."/>
            <person name="Atomi H."/>
            <person name="Kanai T."/>
            <person name="Matsumi R."/>
            <person name="Fujiwara S."/>
            <person name="Imanaka T."/>
        </authorList>
    </citation>
    <scope>NUCLEOTIDE SEQUENCE [LARGE SCALE GENOMIC DNA]</scope>
    <source>
        <strain>ATCC BAA-918 / JCM 12380 / KOD1</strain>
    </source>
</reference>
<reference key="2">
    <citation type="journal article" date="2007" name="Science">
        <title>Archaeal type III RuBisCOs function in a pathway for AMP metabolism.</title>
        <authorList>
            <person name="Sato T."/>
            <person name="Atomi H."/>
            <person name="Imanaka T."/>
        </authorList>
    </citation>
    <scope>FUNCTION</scope>
    <scope>CATALYTIC ACTIVITY</scope>
    <scope>PATHWAY</scope>
    <source>
        <strain>ATCC BAA-918 / JCM 12380 / KOD1</strain>
    </source>
</reference>
<reference key="3">
    <citation type="journal article" date="2012" name="J. Bacteriol.">
        <title>Enzymatic characterization of AMP phosphorylase and ribose-1,5-bisphosphate isomerase functioning in an archaeal AMP metabolic pathway.</title>
        <authorList>
            <person name="Aono R."/>
            <person name="Sato T."/>
            <person name="Yano A."/>
            <person name="Yoshida S."/>
            <person name="Nishitani Y."/>
            <person name="Miki K."/>
            <person name="Imanaka T."/>
            <person name="Atomi H."/>
        </authorList>
    </citation>
    <scope>FUNCTION</scope>
    <scope>CATALYTIC ACTIVITY</scope>
    <scope>SUBSTRATE SPECIFICITY</scope>
    <scope>ACTIVITY REGULATION</scope>
    <scope>KINETIC PARAMETERS</scope>
    <scope>INDUCTION</scope>
    <scope>PATHWAY</scope>
    <source>
        <strain>ATCC BAA-918 / JCM 12380 / KOD1</strain>
    </source>
</reference>
<reference key="4">
    <citation type="journal article" date="2012" name="J. Biol. Chem.">
        <title>Dynamic, ligand-dependent conformational change triggers reaction of ribose-1,5-bisphosphate isomerase from Thermococcus kodakarensis KOD1.</title>
        <authorList>
            <person name="Nakamura A."/>
            <person name="Fujihashi M."/>
            <person name="Aono R."/>
            <person name="Sato T."/>
            <person name="Nishiba Y."/>
            <person name="Yoshida S."/>
            <person name="Yano A."/>
            <person name="Atomi H."/>
            <person name="Imanaka T."/>
            <person name="Miki K."/>
        </authorList>
    </citation>
    <scope>X-RAY CRYSTALLOGRAPHY (2.50 ANGSTROMS) OF APOENZYME AND WILD-TYPE IN COMPLEX WITH PRODUCT AND MUTANT SER-133 IN COMPLEX WITH SUBSTRATE</scope>
    <scope>FUNCTION</scope>
    <scope>CATALYTIC ACTIVITY</scope>
    <scope>SUBSTRATE SPECIFICITY</scope>
    <scope>SUBUNIT</scope>
    <scope>REACTION MECHANISM</scope>
    <scope>ACTIVE SITES</scope>
    <scope>MUTAGENESIS OF CYS-133; ASP-202 AND ARG-227</scope>
    <source>
        <strain>ATCC BAA-918 / JCM 12380 / KOD1</strain>
    </source>
</reference>
<sequence length="322" mass="36302">MAVVKEVLEIAEKIKNMEIRGAGKIARSAAYALQLQAEKSKATNVDEFWKEMKQAAKILFETRPTAVSLPNALRYVMHRGKIAYSSGADLEQLRFVIINAAKEFIHNSEKALERIGEFGAKRIEDGDVIMTHCHSKAAISVMKTAWEQGKDIKVIVTETRPKWQGKITAKELASYGIPVIYVVDSAARHYMKMTDKVVMGADSITVNGAVINKIGTALIALTAKEHRVWTMIAAETYKFHPETMLGQLVEIEMRDPTEVIPEDELKTWPKNIEVWNPAFDVTPPEYVDVIITERGIIPPYAAIDILREEFGWALKYTEPWED</sequence>